<keyword id="KW-0025">Alternative splicing</keyword>
<keyword id="KW-0131">Cell cycle</keyword>
<keyword id="KW-0132">Cell division</keyword>
<keyword id="KW-0966">Cell projection</keyword>
<keyword id="KW-0969">Cilium</keyword>
<keyword id="KW-0970">Cilium biogenesis/degradation</keyword>
<keyword id="KW-0175">Coiled coil</keyword>
<keyword id="KW-0963">Cytoplasm</keyword>
<keyword id="KW-0206">Cytoskeleton</keyword>
<keyword id="KW-1015">Disulfide bond</keyword>
<keyword id="KW-0493">Microtubule</keyword>
<keyword id="KW-0597">Phosphoprotein</keyword>
<keyword id="KW-1185">Reference proteome</keyword>
<evidence type="ECO:0000250" key="1">
    <source>
        <dbReference type="UniProtKB" id="A2RUB6"/>
    </source>
</evidence>
<evidence type="ECO:0000255" key="2"/>
<evidence type="ECO:0000256" key="3">
    <source>
        <dbReference type="SAM" id="MobiDB-lite"/>
    </source>
</evidence>
<evidence type="ECO:0000269" key="4">
    <source>
    </source>
</evidence>
<evidence type="ECO:0000269" key="5">
    <source>
    </source>
</evidence>
<evidence type="ECO:0000303" key="6">
    <source>
    </source>
</evidence>
<evidence type="ECO:0000305" key="7"/>
<evidence type="ECO:0000305" key="8">
    <source>
    </source>
</evidence>
<evidence type="ECO:0000312" key="9">
    <source>
        <dbReference type="MGI" id="MGI:2443639"/>
    </source>
</evidence>
<evidence type="ECO:0007744" key="10">
    <source>
    </source>
</evidence>
<reference key="1">
    <citation type="journal article" date="2005" name="Science">
        <title>The transcriptional landscape of the mammalian genome.</title>
        <authorList>
            <person name="Carninci P."/>
            <person name="Kasukawa T."/>
            <person name="Katayama S."/>
            <person name="Gough J."/>
            <person name="Frith M.C."/>
            <person name="Maeda N."/>
            <person name="Oyama R."/>
            <person name="Ravasi T."/>
            <person name="Lenhard B."/>
            <person name="Wells C."/>
            <person name="Kodzius R."/>
            <person name="Shimokawa K."/>
            <person name="Bajic V.B."/>
            <person name="Brenner S.E."/>
            <person name="Batalov S."/>
            <person name="Forrest A.R."/>
            <person name="Zavolan M."/>
            <person name="Davis M.J."/>
            <person name="Wilming L.G."/>
            <person name="Aidinis V."/>
            <person name="Allen J.E."/>
            <person name="Ambesi-Impiombato A."/>
            <person name="Apweiler R."/>
            <person name="Aturaliya R.N."/>
            <person name="Bailey T.L."/>
            <person name="Bansal M."/>
            <person name="Baxter L."/>
            <person name="Beisel K.W."/>
            <person name="Bersano T."/>
            <person name="Bono H."/>
            <person name="Chalk A.M."/>
            <person name="Chiu K.P."/>
            <person name="Choudhary V."/>
            <person name="Christoffels A."/>
            <person name="Clutterbuck D.R."/>
            <person name="Crowe M.L."/>
            <person name="Dalla E."/>
            <person name="Dalrymple B.P."/>
            <person name="de Bono B."/>
            <person name="Della Gatta G."/>
            <person name="di Bernardo D."/>
            <person name="Down T."/>
            <person name="Engstrom P."/>
            <person name="Fagiolini M."/>
            <person name="Faulkner G."/>
            <person name="Fletcher C.F."/>
            <person name="Fukushima T."/>
            <person name="Furuno M."/>
            <person name="Futaki S."/>
            <person name="Gariboldi M."/>
            <person name="Georgii-Hemming P."/>
            <person name="Gingeras T.R."/>
            <person name="Gojobori T."/>
            <person name="Green R.E."/>
            <person name="Gustincich S."/>
            <person name="Harbers M."/>
            <person name="Hayashi Y."/>
            <person name="Hensch T.K."/>
            <person name="Hirokawa N."/>
            <person name="Hill D."/>
            <person name="Huminiecki L."/>
            <person name="Iacono M."/>
            <person name="Ikeo K."/>
            <person name="Iwama A."/>
            <person name="Ishikawa T."/>
            <person name="Jakt M."/>
            <person name="Kanapin A."/>
            <person name="Katoh M."/>
            <person name="Kawasawa Y."/>
            <person name="Kelso J."/>
            <person name="Kitamura H."/>
            <person name="Kitano H."/>
            <person name="Kollias G."/>
            <person name="Krishnan S.P."/>
            <person name="Kruger A."/>
            <person name="Kummerfeld S.K."/>
            <person name="Kurochkin I.V."/>
            <person name="Lareau L.F."/>
            <person name="Lazarevic D."/>
            <person name="Lipovich L."/>
            <person name="Liu J."/>
            <person name="Liuni S."/>
            <person name="McWilliam S."/>
            <person name="Madan Babu M."/>
            <person name="Madera M."/>
            <person name="Marchionni L."/>
            <person name="Matsuda H."/>
            <person name="Matsuzawa S."/>
            <person name="Miki H."/>
            <person name="Mignone F."/>
            <person name="Miyake S."/>
            <person name="Morris K."/>
            <person name="Mottagui-Tabar S."/>
            <person name="Mulder N."/>
            <person name="Nakano N."/>
            <person name="Nakauchi H."/>
            <person name="Ng P."/>
            <person name="Nilsson R."/>
            <person name="Nishiguchi S."/>
            <person name="Nishikawa S."/>
            <person name="Nori F."/>
            <person name="Ohara O."/>
            <person name="Okazaki Y."/>
            <person name="Orlando V."/>
            <person name="Pang K.C."/>
            <person name="Pavan W.J."/>
            <person name="Pavesi G."/>
            <person name="Pesole G."/>
            <person name="Petrovsky N."/>
            <person name="Piazza S."/>
            <person name="Reed J."/>
            <person name="Reid J.F."/>
            <person name="Ring B.Z."/>
            <person name="Ringwald M."/>
            <person name="Rost B."/>
            <person name="Ruan Y."/>
            <person name="Salzberg S.L."/>
            <person name="Sandelin A."/>
            <person name="Schneider C."/>
            <person name="Schoenbach C."/>
            <person name="Sekiguchi K."/>
            <person name="Semple C.A."/>
            <person name="Seno S."/>
            <person name="Sessa L."/>
            <person name="Sheng Y."/>
            <person name="Shibata Y."/>
            <person name="Shimada H."/>
            <person name="Shimada K."/>
            <person name="Silva D."/>
            <person name="Sinclair B."/>
            <person name="Sperling S."/>
            <person name="Stupka E."/>
            <person name="Sugiura K."/>
            <person name="Sultana R."/>
            <person name="Takenaka Y."/>
            <person name="Taki K."/>
            <person name="Tammoja K."/>
            <person name="Tan S.L."/>
            <person name="Tang S."/>
            <person name="Taylor M.S."/>
            <person name="Tegner J."/>
            <person name="Teichmann S.A."/>
            <person name="Ueda H.R."/>
            <person name="van Nimwegen E."/>
            <person name="Verardo R."/>
            <person name="Wei C.L."/>
            <person name="Yagi K."/>
            <person name="Yamanishi H."/>
            <person name="Zabarovsky E."/>
            <person name="Zhu S."/>
            <person name="Zimmer A."/>
            <person name="Hide W."/>
            <person name="Bult C."/>
            <person name="Grimmond S.M."/>
            <person name="Teasdale R.D."/>
            <person name="Liu E.T."/>
            <person name="Brusic V."/>
            <person name="Quackenbush J."/>
            <person name="Wahlestedt C."/>
            <person name="Mattick J.S."/>
            <person name="Hume D.A."/>
            <person name="Kai C."/>
            <person name="Sasaki D."/>
            <person name="Tomaru Y."/>
            <person name="Fukuda S."/>
            <person name="Kanamori-Katayama M."/>
            <person name="Suzuki M."/>
            <person name="Aoki J."/>
            <person name="Arakawa T."/>
            <person name="Iida J."/>
            <person name="Imamura K."/>
            <person name="Itoh M."/>
            <person name="Kato T."/>
            <person name="Kawaji H."/>
            <person name="Kawagashira N."/>
            <person name="Kawashima T."/>
            <person name="Kojima M."/>
            <person name="Kondo S."/>
            <person name="Konno H."/>
            <person name="Nakano K."/>
            <person name="Ninomiya N."/>
            <person name="Nishio T."/>
            <person name="Okada M."/>
            <person name="Plessy C."/>
            <person name="Shibata K."/>
            <person name="Shiraki T."/>
            <person name="Suzuki S."/>
            <person name="Tagami M."/>
            <person name="Waki K."/>
            <person name="Watahiki A."/>
            <person name="Okamura-Oho Y."/>
            <person name="Suzuki H."/>
            <person name="Kawai J."/>
            <person name="Hayashizaki Y."/>
        </authorList>
    </citation>
    <scope>NUCLEOTIDE SEQUENCE [LARGE SCALE MRNA] (ISOFORM 2)</scope>
    <scope>NUCLEOTIDE SEQUENCE [LARGE SCALE MRNA] OF 34-481 (ISOFORM 3)</scope>
    <source>
        <strain>C57BL/6J</strain>
        <tissue>Lung</tissue>
        <tissue>Mammary gland</tissue>
        <tissue>Oviduct</tissue>
        <tissue>Visual cortex</tissue>
    </source>
</reference>
<reference key="2">
    <citation type="journal article" date="2004" name="Genome Res.">
        <title>The status, quality, and expansion of the NIH full-length cDNA project: the Mammalian Gene Collection (MGC).</title>
        <authorList>
            <consortium name="The MGC Project Team"/>
        </authorList>
    </citation>
    <scope>NUCLEOTIDE SEQUENCE [LARGE SCALE MRNA] (ISOFORM 1)</scope>
    <source>
        <strain>C57BL/6J</strain>
        <tissue>Brain</tissue>
    </source>
</reference>
<reference key="3">
    <citation type="journal article" date="2007" name="Proc. Natl. Acad. Sci. U.S.A.">
        <title>Large-scale phosphorylation analysis of mouse liver.</title>
        <authorList>
            <person name="Villen J."/>
            <person name="Beausoleil S.A."/>
            <person name="Gerber S.A."/>
            <person name="Gygi S.P."/>
        </authorList>
    </citation>
    <scope>IDENTIFICATION BY MASS SPECTROMETRY [LARGE SCALE ANALYSIS]</scope>
    <source>
        <tissue>Liver</tissue>
    </source>
</reference>
<reference key="4">
    <citation type="journal article" date="2010" name="Cell">
        <title>A tissue-specific atlas of mouse protein phosphorylation and expression.</title>
        <authorList>
            <person name="Huttlin E.L."/>
            <person name="Jedrychowski M.P."/>
            <person name="Elias J.E."/>
            <person name="Goswami T."/>
            <person name="Rad R."/>
            <person name="Beausoleil S.A."/>
            <person name="Villen J."/>
            <person name="Haas W."/>
            <person name="Sowa M.E."/>
            <person name="Gygi S.P."/>
        </authorList>
    </citation>
    <scope>PHOSPHORYLATION [LARGE SCALE ANALYSIS] AT SER-366 AND SER-595</scope>
    <scope>IDENTIFICATION BY MASS SPECTROMETRY [LARGE SCALE ANALYSIS]</scope>
    <source>
        <tissue>Heart</tissue>
        <tissue>Kidney</tissue>
        <tissue>Testis</tissue>
    </source>
</reference>
<reference key="5">
    <citation type="journal article" date="2010" name="Neurogenetics">
        <title>Progressive retinal atrophy in Schapendoes dogs: mutation of the newly identified CCDC66 gene.</title>
        <authorList>
            <person name="Dekomien G."/>
            <person name="Vollrath C."/>
            <person name="Petrasch-Parwez E."/>
            <person name="Boeve M.H."/>
            <person name="Akkad D.A."/>
            <person name="Gerding W.M."/>
            <person name="Epplen J.T."/>
        </authorList>
    </citation>
    <scope>SUBUNIT</scope>
    <scope>SUBCELLULAR LOCATION</scope>
    <scope>TISSUE SPECIFICITY</scope>
</reference>
<reference key="6">
    <citation type="journal article" date="2011" name="Hum. Mol. Genet.">
        <title>Ccdc66 null mutation causes retinal degeneration and dysfunction.</title>
        <authorList>
            <person name="Gerding W.M."/>
            <person name="Schreiber S."/>
            <person name="Schulte-Middelmann T."/>
            <person name="de Castro Marques A."/>
            <person name="Atorf J."/>
            <person name="Akkad D.A."/>
            <person name="Dekomien G."/>
            <person name="Kremers J."/>
            <person name="Dermietzel R."/>
            <person name="Gal A."/>
            <person name="Ruelicke T."/>
            <person name="Ibrahim S."/>
            <person name="Epplen J.T."/>
            <person name="Petrasch-Parwez E."/>
        </authorList>
    </citation>
    <scope>FUNCTION</scope>
    <scope>TISSUE SPECIFICITY</scope>
    <scope>DEVELOPMENTAL STAGE</scope>
    <scope>DISRUPTION PHENOTYPE</scope>
</reference>
<comment type="function">
    <text evidence="1 5">Microtubule-binding protein required for ciliogenesis. May function in ciliogenesis by mediating the transport of proteins like BBS4 to the cilium, but also through the organization of the centriolar satellites. Required for the assembly of signaling-competent cilia with proper structure and length. Mediates this function in part by regulating transition zone assembly and basal body recruitment of the IFT-B complex. Cooperates with the ciliopathy proteins CSPP1 and CEP104 during cilium length regulation. Plays two important roles during cell division. First, is required for mitotic progression via regulation of spindle assembly, organization and orientation, levels of spindle microtubules (MTs), kinetochore-fiber integrity, and chromosome alignment. Second, functions during cytokinesis in part by regulating assembly and organization of central spindle and midbody MTs (By similarity). Plays a role in retina morphogenesis and/or homeostasis (PubMed:21680557).</text>
</comment>
<comment type="subunit">
    <text evidence="1 8">Homodimer; disulfide-linked (Probable). Interacts with CEP290. Interacts with PCM1 (By similarity). Interacts with ARMC9, TOGARAM1, CSPP1 and CEP104 (By similarity). Interacts with CDK5RAP2, CEP152, CEP192, TBG1 and PRC1 (By similarity).</text>
</comment>
<comment type="subcellular location">
    <subcellularLocation>
        <location evidence="1">Cytoplasm</location>
        <location evidence="1">Cytoskeleton</location>
        <location evidence="1">Microtubule organizing center</location>
        <location evidence="1">Centrosome</location>
    </subcellularLocation>
    <subcellularLocation>
        <location evidence="1">Cytoplasm</location>
        <location evidence="1">Cytoskeleton</location>
        <location evidence="1">Microtubule organizing center</location>
        <location evidence="1">Centrosome</location>
        <location evidence="1">Centriolar satellite</location>
    </subcellularLocation>
    <subcellularLocation>
        <location evidence="1">Cell projection</location>
        <location evidence="1">Cilium</location>
    </subcellularLocation>
    <subcellularLocation>
        <location evidence="1">Cytoplasm</location>
        <location evidence="1">Cytoskeleton</location>
        <location evidence="1">Cilium basal body</location>
    </subcellularLocation>
    <subcellularLocation>
        <location evidence="1">Cytoplasm</location>
        <location evidence="1">Cytoskeleton</location>
        <location evidence="1">Cilium axoneme</location>
    </subcellularLocation>
    <subcellularLocation>
        <location evidence="4">Photoreceptor inner segment</location>
    </subcellularLocation>
    <subcellularLocation>
        <location evidence="4">Cell projection</location>
        <location evidence="4">Cilium</location>
        <location evidence="4">Photoreceptor outer segment</location>
    </subcellularLocation>
    <text evidence="1 4">Restricted to the centrosomes and the spindle microtubules during mitosis (By similarity). Enriched in the inner segment of the photoreceptor (PubMed:19777273).</text>
</comment>
<comment type="alternative products">
    <event type="alternative splicing"/>
    <isoform>
        <id>Q6NS45-1</id>
        <name>1</name>
        <sequence type="displayed"/>
    </isoform>
    <isoform>
        <id>Q6NS45-2</id>
        <name>2</name>
        <sequence type="described" ref="VSP_031589 VSP_031590"/>
    </isoform>
    <isoform>
        <id>Q6NS45-3</id>
        <name>3</name>
        <sequence type="described" ref="VSP_031588"/>
    </isoform>
</comment>
<comment type="tissue specificity">
    <text evidence="4 5">Widely expressed (PubMed:19777273). Expressed in retina by rod photoreceptors but also detected in outer plexiform and ganglion cell layers (at protein level) (PubMed:19777273, PubMed:21680557).</text>
</comment>
<comment type="developmental stage">
    <text evidence="5">Expressed in the retina from postnatal stages to adulthood. Highest levels are observed at postnatal stage P1 and P4 and expression decreases afterward. Steady levels are observed from P12 to adulthood. Expression increases in the outer segments from P12 to P19 paralleling the differentiation of outer segments.</text>
</comment>
<comment type="disruption phenotype">
    <text evidence="5">Mice lacking Ccdc66 are viable but display degeneration of the retina. Initial formation of the retina is normal up to postnatal stage P10. Malformation of photoreceptors develops around P13. The degeneration progresses slowly until 3 months after birth, when the outer nuclear layer is reduced to 5-6 rows. From 5 to 7 months, only a thin outer nuclear and photoreceptor layer with severely shrunken outer and inner segments is preserved. It is associated with impaired photoreceptor function with early visual impairment detectable 1 month after birth and progressing slightly until 7 months.</text>
</comment>
<comment type="sequence caution" evidence="7">
    <conflict type="frameshift">
        <sequence resource="EMBL-CDS" id="AAH70471"/>
    </conflict>
</comment>
<comment type="sequence caution" evidence="7">
    <conflict type="miscellaneous discrepancy">
        <sequence resource="EMBL-CDS" id="AAH72583"/>
    </conflict>
    <text>Partial nucleotide duplication in position 392 that disrupts the frame.</text>
</comment>
<comment type="sequence caution" evidence="7">
    <conflict type="erroneous initiation">
        <sequence resource="EMBL-CDS" id="BAC35302"/>
    </conflict>
    <text>Truncated N-terminus.</text>
</comment>
<comment type="sequence caution" evidence="7">
    <conflict type="erroneous initiation">
        <sequence resource="EMBL-CDS" id="BAC39936"/>
    </conflict>
    <text>Truncated N-terminus.</text>
</comment>
<comment type="sequence caution" evidence="7">
    <conflict type="erroneous initiation">
        <sequence resource="EMBL-CDS" id="BAE34603"/>
    </conflict>
    <text>Truncated N-terminus.</text>
</comment>
<accession>Q6NS45</accession>
<accession>Q3ULU6</accession>
<accession>Q8C304</accession>
<accession>Q8C6T6</accession>
<proteinExistence type="evidence at protein level"/>
<protein>
    <recommendedName>
        <fullName evidence="7">Coiled-coil domain-containing protein 66</fullName>
    </recommendedName>
</protein>
<name>CCD66_MOUSE</name>
<feature type="chain" id="PRO_0000320038" description="Coiled-coil domain-containing protein 66">
    <location>
        <begin position="1"/>
        <end position="935"/>
    </location>
</feature>
<feature type="region of interest" description="Disordered" evidence="3">
    <location>
        <begin position="76"/>
        <end position="103"/>
    </location>
</feature>
<feature type="region of interest" description="Disordered" evidence="3">
    <location>
        <begin position="470"/>
        <end position="491"/>
    </location>
</feature>
<feature type="region of interest" description="Mediates localization to cilia, centrosomes and spindle microtubules and the interaction with PCM1, CEP290, CEP104 and CSPP1" evidence="1">
    <location>
        <begin position="567"/>
        <end position="935"/>
    </location>
</feature>
<feature type="region of interest" description="Disordered" evidence="3">
    <location>
        <begin position="577"/>
        <end position="602"/>
    </location>
</feature>
<feature type="region of interest" description="Disordered" evidence="3">
    <location>
        <begin position="738"/>
        <end position="794"/>
    </location>
</feature>
<feature type="coiled-coil region" evidence="2">
    <location>
        <begin position="462"/>
        <end position="555"/>
    </location>
</feature>
<feature type="compositionally biased region" description="Polar residues" evidence="3">
    <location>
        <begin position="76"/>
        <end position="96"/>
    </location>
</feature>
<feature type="compositionally biased region" description="Basic and acidic residues" evidence="3">
    <location>
        <begin position="473"/>
        <end position="491"/>
    </location>
</feature>
<feature type="compositionally biased region" description="Polar residues" evidence="3">
    <location>
        <begin position="590"/>
        <end position="602"/>
    </location>
</feature>
<feature type="compositionally biased region" description="Basic and acidic residues" evidence="3">
    <location>
        <begin position="752"/>
        <end position="782"/>
    </location>
</feature>
<feature type="compositionally biased region" description="Polar residues" evidence="3">
    <location>
        <begin position="783"/>
        <end position="794"/>
    </location>
</feature>
<feature type="modified residue" description="Phosphothreonine" evidence="1">
    <location>
        <position position="114"/>
    </location>
</feature>
<feature type="modified residue" description="Phosphoserine" evidence="10">
    <location>
        <position position="366"/>
    </location>
</feature>
<feature type="modified residue" description="Phosphoserine" evidence="10">
    <location>
        <position position="595"/>
    </location>
</feature>
<feature type="splice variant" id="VSP_031588" description="In isoform 3." evidence="6">
    <original>MNLGDGLKLETELLDGKTKLILSPYEHKSKVSVK</original>
    <variation>M</variation>
    <location>
        <begin position="1"/>
        <end position="34"/>
    </location>
</feature>
<feature type="splice variant" id="VSP_031589" description="In isoform 2." evidence="6">
    <original>E</original>
    <variation>G</variation>
    <location>
        <position position="26"/>
    </location>
</feature>
<feature type="splice variant" id="VSP_031590" description="In isoform 2." evidence="6">
    <location>
        <begin position="27"/>
        <end position="182"/>
    </location>
</feature>
<feature type="sequence conflict" description="In Ref. 1; BAE26352." evidence="7" ref="1">
    <original>K</original>
    <variation>T</variation>
    <location>
        <position position="137"/>
    </location>
</feature>
<feature type="sequence conflict" description="In Ref. 1; BAE26352." evidence="7" ref="1">
    <original>F</original>
    <variation>Y</variation>
    <location>
        <position position="405"/>
    </location>
</feature>
<sequence>MNLGDGLKLETELLDGKTKLILSPYEHKSKVSVKMGNKFKIAKCPLRTKQTGHTLKSTQNTYIGNENLSQKKISTLDTSQAKPENSRLTFSPSTDKQYSEKDSVRVQKEISPTTSNIRKIINTTGTCPVAKQKPCKKNPTAETMNSGLVCLTQDQLRQILMLSVNQGNGSVCLTETGEEEASQDSLHLINIPSQPKDVNDTGFLQNTEAASPVTSEHEHVHRRAQEAFQQCEQKAATENEWKPADIFSTLGERERDKSLLEARRAQWKKELDEQVALKKKEKEASQKWHNPWKPSDIECEKSQVHDQSKEARLLESPCSAIKQEQQRKWIEELNKQVEDDQQRKAEERMIYSKGEEHDRWAVHFDSLKSHPGSQSRLSSQLTHQHLESLCVSPDTQELADVNGVFTPPPGVQAEPSEKEQRARPVLEMAVSHGPKTNFLRSMTALLDPAQIEERERRRQKQLEHQKAIMAQVEENRRKKRLEEEQRKKEEQELELRLAREREEMQRQYEEDILKQRQREEIMTLKTNELFHTMQRAQELAQRLKQEQRIRELAQKGHDTSRLIQNLGAQVDYKAFTTISSSHSDPEETADTSTASPKKDTGVQTDDVNLGIFNDALPPCGSVTEKGIRNISSPEISAEFSGQTDIRKENQELSMNKGTNLDKENSWHNGQCNQYRRTEKQTKLMKKCPKKPAWNINKPLKKYVPASAKYPAHLQKEKEEKKVQRQMELLHLVERNNPENLSQNRGISPLATSHRETESESRLHLIKKVEEPLKTPSVSKERFQTSPAVKNRTQQTQSNVLHLPLKNNDYEKETLTLGDGHTKLSDEMSEPSHFIPYVRTNEIYYLDPDAPLSRPSTQDNQYQKSHDCAREQELFDSDHIRDPLLNPKLVKNRDRQQAILKGLSELRQGLLQKQKELETNLIPLTANQEDNFSSSF</sequence>
<organism>
    <name type="scientific">Mus musculus</name>
    <name type="common">Mouse</name>
    <dbReference type="NCBI Taxonomy" id="10090"/>
    <lineage>
        <taxon>Eukaryota</taxon>
        <taxon>Metazoa</taxon>
        <taxon>Chordata</taxon>
        <taxon>Craniata</taxon>
        <taxon>Vertebrata</taxon>
        <taxon>Euteleostomi</taxon>
        <taxon>Mammalia</taxon>
        <taxon>Eutheria</taxon>
        <taxon>Euarchontoglires</taxon>
        <taxon>Glires</taxon>
        <taxon>Rodentia</taxon>
        <taxon>Myomorpha</taxon>
        <taxon>Muroidea</taxon>
        <taxon>Muridae</taxon>
        <taxon>Murinae</taxon>
        <taxon>Mus</taxon>
        <taxon>Mus</taxon>
    </lineage>
</organism>
<dbReference type="EMBL" id="AK053185">
    <property type="protein sequence ID" value="BAC35302.1"/>
    <property type="status" value="ALT_INIT"/>
    <property type="molecule type" value="mRNA"/>
</dbReference>
<dbReference type="EMBL" id="AK087583">
    <property type="protein sequence ID" value="BAC39936.1"/>
    <property type="status" value="ALT_INIT"/>
    <property type="molecule type" value="mRNA"/>
</dbReference>
<dbReference type="EMBL" id="AK145297">
    <property type="protein sequence ID" value="BAE26352.1"/>
    <property type="molecule type" value="mRNA"/>
</dbReference>
<dbReference type="EMBL" id="AK158666">
    <property type="protein sequence ID" value="BAE34603.1"/>
    <property type="status" value="ALT_INIT"/>
    <property type="molecule type" value="mRNA"/>
</dbReference>
<dbReference type="EMBL" id="BC070471">
    <property type="protein sequence ID" value="AAH70471.2"/>
    <property type="status" value="ALT_FRAME"/>
    <property type="molecule type" value="mRNA"/>
</dbReference>
<dbReference type="EMBL" id="BC072583">
    <property type="protein sequence ID" value="AAH72583.1"/>
    <property type="status" value="ALT_SEQ"/>
    <property type="molecule type" value="mRNA"/>
</dbReference>
<dbReference type="CCDS" id="CCDS36843.1">
    <molecule id="Q6NS45-1"/>
</dbReference>
<dbReference type="RefSeq" id="NP_796085.3">
    <molecule id="Q6NS45-1"/>
    <property type="nucleotide sequence ID" value="NM_177111.3"/>
</dbReference>
<dbReference type="RefSeq" id="XP_006519190.1">
    <molecule id="Q6NS45-3"/>
    <property type="nucleotide sequence ID" value="XM_006519127.4"/>
</dbReference>
<dbReference type="RefSeq" id="XP_006519194.1">
    <molecule id="Q6NS45-2"/>
    <property type="nucleotide sequence ID" value="XM_006519131.4"/>
</dbReference>
<dbReference type="SMR" id="Q6NS45"/>
<dbReference type="FunCoup" id="Q6NS45">
    <property type="interactions" value="1321"/>
</dbReference>
<dbReference type="STRING" id="10090.ENSMUSP00000153023"/>
<dbReference type="GlyGen" id="Q6NS45">
    <property type="glycosylation" value="1 site, 1 O-linked glycan (1 site)"/>
</dbReference>
<dbReference type="iPTMnet" id="Q6NS45"/>
<dbReference type="PhosphoSitePlus" id="Q6NS45"/>
<dbReference type="PaxDb" id="10090-ENSMUSP00000052546"/>
<dbReference type="ProteomicsDB" id="265715">
    <molecule id="Q6NS45-1"/>
</dbReference>
<dbReference type="ProteomicsDB" id="265716">
    <molecule id="Q6NS45-2"/>
</dbReference>
<dbReference type="ProteomicsDB" id="265717">
    <molecule id="Q6NS45-3"/>
</dbReference>
<dbReference type="Antibodypedia" id="31476">
    <property type="antibodies" value="107 antibodies from 17 providers"/>
</dbReference>
<dbReference type="DNASU" id="320234"/>
<dbReference type="Ensembl" id="ENSMUST00000050480.8">
    <molecule id="Q6NS45-2"/>
    <property type="protein sequence ID" value="ENSMUSP00000052546.8"/>
    <property type="gene ID" value="ENSMUSG00000046753.11"/>
</dbReference>
<dbReference type="Ensembl" id="ENSMUST00000223689.2">
    <molecule id="Q6NS45-1"/>
    <property type="protein sequence ID" value="ENSMUSP00000153023.2"/>
    <property type="gene ID" value="ENSMUSG00000046753.11"/>
</dbReference>
<dbReference type="GeneID" id="320234"/>
<dbReference type="KEGG" id="mmu:320234"/>
<dbReference type="UCSC" id="uc007stw.2">
    <molecule id="Q6NS45-1"/>
    <property type="organism name" value="mouse"/>
</dbReference>
<dbReference type="UCSC" id="uc011zhw.2">
    <molecule id="Q6NS45-2"/>
    <property type="organism name" value="mouse"/>
</dbReference>
<dbReference type="AGR" id="MGI:2443639"/>
<dbReference type="CTD" id="285331"/>
<dbReference type="MGI" id="MGI:2443639">
    <property type="gene designation" value="Ccdc66"/>
</dbReference>
<dbReference type="VEuPathDB" id="HostDB:ENSMUSG00000046753"/>
<dbReference type="eggNOG" id="ENOG502R1PQ">
    <property type="taxonomic scope" value="Eukaryota"/>
</dbReference>
<dbReference type="GeneTree" id="ENSGT00390000012411"/>
<dbReference type="HOGENOM" id="CLU_016964_0_0_1"/>
<dbReference type="InParanoid" id="Q6NS45"/>
<dbReference type="OMA" id="MKSNLVC"/>
<dbReference type="OrthoDB" id="10042846at2759"/>
<dbReference type="PhylomeDB" id="Q6NS45"/>
<dbReference type="TreeFam" id="TF350489"/>
<dbReference type="BioGRID-ORCS" id="320234">
    <property type="hits" value="2 hits in 76 CRISPR screens"/>
</dbReference>
<dbReference type="ChiTaRS" id="Ccdc66">
    <property type="organism name" value="mouse"/>
</dbReference>
<dbReference type="PRO" id="PR:Q6NS45"/>
<dbReference type="Proteomes" id="UP000000589">
    <property type="component" value="Chromosome 14"/>
</dbReference>
<dbReference type="RNAct" id="Q6NS45">
    <property type="molecule type" value="protein"/>
</dbReference>
<dbReference type="Bgee" id="ENSMUSG00000046753">
    <property type="expression patterns" value="Expressed in otolith organ and 226 other cell types or tissues"/>
</dbReference>
<dbReference type="GO" id="GO:0005930">
    <property type="term" value="C:axoneme"/>
    <property type="evidence" value="ECO:0000250"/>
    <property type="project" value="UniProtKB"/>
</dbReference>
<dbReference type="GO" id="GO:0030054">
    <property type="term" value="C:cell junction"/>
    <property type="evidence" value="ECO:0007669"/>
    <property type="project" value="Ensembl"/>
</dbReference>
<dbReference type="GO" id="GO:0034451">
    <property type="term" value="C:centriolar satellite"/>
    <property type="evidence" value="ECO:0000250"/>
    <property type="project" value="UniProtKB"/>
</dbReference>
<dbReference type="GO" id="GO:0005813">
    <property type="term" value="C:centrosome"/>
    <property type="evidence" value="ECO:0000250"/>
    <property type="project" value="UniProtKB"/>
</dbReference>
<dbReference type="GO" id="GO:0036064">
    <property type="term" value="C:ciliary basal body"/>
    <property type="evidence" value="ECO:0000250"/>
    <property type="project" value="UniProtKB"/>
</dbReference>
<dbReference type="GO" id="GO:0005929">
    <property type="term" value="C:cilium"/>
    <property type="evidence" value="ECO:0000250"/>
    <property type="project" value="UniProtKB"/>
</dbReference>
<dbReference type="GO" id="GO:0005829">
    <property type="term" value="C:cytosol"/>
    <property type="evidence" value="ECO:0007669"/>
    <property type="project" value="Ensembl"/>
</dbReference>
<dbReference type="GO" id="GO:0090543">
    <property type="term" value="C:Flemming body"/>
    <property type="evidence" value="ECO:0007669"/>
    <property type="project" value="Ensembl"/>
</dbReference>
<dbReference type="GO" id="GO:0043231">
    <property type="term" value="C:intracellular membrane-bounded organelle"/>
    <property type="evidence" value="ECO:0007669"/>
    <property type="project" value="Ensembl"/>
</dbReference>
<dbReference type="GO" id="GO:0005874">
    <property type="term" value="C:microtubule"/>
    <property type="evidence" value="ECO:0000250"/>
    <property type="project" value="UniProtKB"/>
</dbReference>
<dbReference type="GO" id="GO:0030496">
    <property type="term" value="C:midbody"/>
    <property type="evidence" value="ECO:0000250"/>
    <property type="project" value="UniProtKB"/>
</dbReference>
<dbReference type="GO" id="GO:0001917">
    <property type="term" value="C:photoreceptor inner segment"/>
    <property type="evidence" value="ECO:0000314"/>
    <property type="project" value="UniProtKB"/>
</dbReference>
<dbReference type="GO" id="GO:0001750">
    <property type="term" value="C:photoreceptor outer segment"/>
    <property type="evidence" value="ECO:0007669"/>
    <property type="project" value="UniProtKB-SubCell"/>
</dbReference>
<dbReference type="GO" id="GO:0005886">
    <property type="term" value="C:plasma membrane"/>
    <property type="evidence" value="ECO:0007669"/>
    <property type="project" value="Ensembl"/>
</dbReference>
<dbReference type="GO" id="GO:0005819">
    <property type="term" value="C:spindle"/>
    <property type="evidence" value="ECO:0000250"/>
    <property type="project" value="UniProtKB"/>
</dbReference>
<dbReference type="GO" id="GO:0008017">
    <property type="term" value="F:microtubule binding"/>
    <property type="evidence" value="ECO:0000250"/>
    <property type="project" value="UniProtKB"/>
</dbReference>
<dbReference type="GO" id="GO:0042803">
    <property type="term" value="F:protein homodimerization activity"/>
    <property type="evidence" value="ECO:0000314"/>
    <property type="project" value="UniProtKB"/>
</dbReference>
<dbReference type="GO" id="GO:0051301">
    <property type="term" value="P:cell division"/>
    <property type="evidence" value="ECO:0007669"/>
    <property type="project" value="UniProtKB-KW"/>
</dbReference>
<dbReference type="GO" id="GO:1905349">
    <property type="term" value="P:ciliary transition zone assembly"/>
    <property type="evidence" value="ECO:0000250"/>
    <property type="project" value="UniProtKB"/>
</dbReference>
<dbReference type="GO" id="GO:0060271">
    <property type="term" value="P:cilium assembly"/>
    <property type="evidence" value="ECO:0000250"/>
    <property type="project" value="UniProtKB"/>
</dbReference>
<dbReference type="GO" id="GO:0050908">
    <property type="term" value="P:detection of light stimulus involved in visual perception"/>
    <property type="evidence" value="ECO:0000315"/>
    <property type="project" value="CACAO"/>
</dbReference>
<dbReference type="GO" id="GO:0000132">
    <property type="term" value="P:establishment of mitotic spindle orientation"/>
    <property type="evidence" value="ECO:0000250"/>
    <property type="project" value="UniProtKB"/>
</dbReference>
<dbReference type="GO" id="GO:0001578">
    <property type="term" value="P:microtubule bundle formation"/>
    <property type="evidence" value="ECO:0000250"/>
    <property type="project" value="UniProtKB"/>
</dbReference>
<dbReference type="GO" id="GO:1902850">
    <property type="term" value="P:microtubule cytoskeleton organization involved in mitosis"/>
    <property type="evidence" value="ECO:0000250"/>
    <property type="project" value="UniProtKB"/>
</dbReference>
<dbReference type="GO" id="GO:0007020">
    <property type="term" value="P:microtubule nucleation"/>
    <property type="evidence" value="ECO:0000250"/>
    <property type="project" value="UniProtKB"/>
</dbReference>
<dbReference type="GO" id="GO:0007080">
    <property type="term" value="P:mitotic metaphase chromosome alignment"/>
    <property type="evidence" value="ECO:0000250"/>
    <property type="project" value="UniProtKB"/>
</dbReference>
<dbReference type="GO" id="GO:0090307">
    <property type="term" value="P:mitotic spindle assembly"/>
    <property type="evidence" value="ECO:0000250"/>
    <property type="project" value="UniProtKB"/>
</dbReference>
<dbReference type="GO" id="GO:0007052">
    <property type="term" value="P:mitotic spindle organization"/>
    <property type="evidence" value="ECO:0000250"/>
    <property type="project" value="UniProtKB"/>
</dbReference>
<dbReference type="GO" id="GO:0060060">
    <property type="term" value="P:post-embryonic retina morphogenesis in camera-type eye"/>
    <property type="evidence" value="ECO:0000315"/>
    <property type="project" value="MGI"/>
</dbReference>
<dbReference type="GO" id="GO:0032465">
    <property type="term" value="P:regulation of cytokinesis"/>
    <property type="evidence" value="ECO:0000250"/>
    <property type="project" value="UniProtKB"/>
</dbReference>
<dbReference type="GO" id="GO:1903564">
    <property type="term" value="P:regulation of protein localization to cilium"/>
    <property type="evidence" value="ECO:0000250"/>
    <property type="project" value="UniProtKB"/>
</dbReference>
<dbReference type="GO" id="GO:0001895">
    <property type="term" value="P:retina homeostasis"/>
    <property type="evidence" value="ECO:0000250"/>
    <property type="project" value="UniProtKB"/>
</dbReference>
<dbReference type="GO" id="GO:0046548">
    <property type="term" value="P:retinal rod cell development"/>
    <property type="evidence" value="ECO:0000315"/>
    <property type="project" value="MGI"/>
</dbReference>
<dbReference type="InterPro" id="IPR039183">
    <property type="entry name" value="CCD66"/>
</dbReference>
<dbReference type="InterPro" id="IPR040467">
    <property type="entry name" value="CCDC66_dom"/>
</dbReference>
<dbReference type="PANTHER" id="PTHR22736">
    <property type="entry name" value="COILED-COIL DOMAIN-CONTAINING PROTEIN 66"/>
    <property type="match status" value="1"/>
</dbReference>
<dbReference type="PANTHER" id="PTHR22736:SF2">
    <property type="entry name" value="COILED-COIL DOMAIN-CONTAINING PROTEIN 66"/>
    <property type="match status" value="1"/>
</dbReference>
<dbReference type="Pfam" id="PF15236">
    <property type="entry name" value="CCDC66"/>
    <property type="match status" value="1"/>
</dbReference>
<gene>
    <name evidence="9" type="primary">Ccdc66</name>
</gene>